<protein>
    <recommendedName>
        <fullName evidence="1">Large ribosomal subunit protein bL12</fullName>
    </recommendedName>
    <alternativeName>
        <fullName evidence="2">50S ribosomal protein L7/L12</fullName>
    </alternativeName>
</protein>
<accession>A0PXT7</accession>
<evidence type="ECO:0000255" key="1">
    <source>
        <dbReference type="HAMAP-Rule" id="MF_00368"/>
    </source>
</evidence>
<evidence type="ECO:0000305" key="2"/>
<dbReference type="EMBL" id="CP000382">
    <property type="protein sequence ID" value="ABK60991.1"/>
    <property type="molecule type" value="Genomic_DNA"/>
</dbReference>
<dbReference type="RefSeq" id="WP_011721209.1">
    <property type="nucleotide sequence ID" value="NC_008593.1"/>
</dbReference>
<dbReference type="SMR" id="A0PXT7"/>
<dbReference type="STRING" id="386415.NT01CX_1106"/>
<dbReference type="KEGG" id="cno:NT01CX_1106"/>
<dbReference type="PATRIC" id="fig|386415.7.peg.216"/>
<dbReference type="eggNOG" id="COG0222">
    <property type="taxonomic scope" value="Bacteria"/>
</dbReference>
<dbReference type="HOGENOM" id="CLU_086499_3_2_9"/>
<dbReference type="Proteomes" id="UP000008220">
    <property type="component" value="Chromosome"/>
</dbReference>
<dbReference type="GO" id="GO:0022625">
    <property type="term" value="C:cytosolic large ribosomal subunit"/>
    <property type="evidence" value="ECO:0007669"/>
    <property type="project" value="TreeGrafter"/>
</dbReference>
<dbReference type="GO" id="GO:0003729">
    <property type="term" value="F:mRNA binding"/>
    <property type="evidence" value="ECO:0007669"/>
    <property type="project" value="TreeGrafter"/>
</dbReference>
<dbReference type="GO" id="GO:0003735">
    <property type="term" value="F:structural constituent of ribosome"/>
    <property type="evidence" value="ECO:0007669"/>
    <property type="project" value="InterPro"/>
</dbReference>
<dbReference type="GO" id="GO:0006412">
    <property type="term" value="P:translation"/>
    <property type="evidence" value="ECO:0007669"/>
    <property type="project" value="UniProtKB-UniRule"/>
</dbReference>
<dbReference type="CDD" id="cd00387">
    <property type="entry name" value="Ribosomal_L7_L12"/>
    <property type="match status" value="1"/>
</dbReference>
<dbReference type="FunFam" id="1.20.5.710:FF:000002">
    <property type="entry name" value="50S ribosomal protein L7/L12"/>
    <property type="match status" value="1"/>
</dbReference>
<dbReference type="FunFam" id="3.30.1390.10:FF:000001">
    <property type="entry name" value="50S ribosomal protein L7/L12"/>
    <property type="match status" value="1"/>
</dbReference>
<dbReference type="Gene3D" id="3.30.1390.10">
    <property type="match status" value="1"/>
</dbReference>
<dbReference type="Gene3D" id="1.20.5.710">
    <property type="entry name" value="Single helix bin"/>
    <property type="match status" value="1"/>
</dbReference>
<dbReference type="HAMAP" id="MF_00368">
    <property type="entry name" value="Ribosomal_bL12"/>
    <property type="match status" value="1"/>
</dbReference>
<dbReference type="InterPro" id="IPR000206">
    <property type="entry name" value="Ribosomal_bL12"/>
</dbReference>
<dbReference type="InterPro" id="IPR013823">
    <property type="entry name" value="Ribosomal_bL12_C"/>
</dbReference>
<dbReference type="InterPro" id="IPR014719">
    <property type="entry name" value="Ribosomal_bL12_C/ClpS-like"/>
</dbReference>
<dbReference type="InterPro" id="IPR008932">
    <property type="entry name" value="Ribosomal_bL12_oligo"/>
</dbReference>
<dbReference type="InterPro" id="IPR036235">
    <property type="entry name" value="Ribosomal_bL12_oligo_N_sf"/>
</dbReference>
<dbReference type="NCBIfam" id="TIGR00855">
    <property type="entry name" value="L12"/>
    <property type="match status" value="1"/>
</dbReference>
<dbReference type="PANTHER" id="PTHR45987">
    <property type="entry name" value="39S RIBOSOMAL PROTEIN L12"/>
    <property type="match status" value="1"/>
</dbReference>
<dbReference type="PANTHER" id="PTHR45987:SF4">
    <property type="entry name" value="LARGE RIBOSOMAL SUBUNIT PROTEIN BL12M"/>
    <property type="match status" value="1"/>
</dbReference>
<dbReference type="Pfam" id="PF00542">
    <property type="entry name" value="Ribosomal_L12"/>
    <property type="match status" value="1"/>
</dbReference>
<dbReference type="Pfam" id="PF16320">
    <property type="entry name" value="Ribosomal_L12_N"/>
    <property type="match status" value="1"/>
</dbReference>
<dbReference type="SUPFAM" id="SSF54736">
    <property type="entry name" value="ClpS-like"/>
    <property type="match status" value="1"/>
</dbReference>
<dbReference type="SUPFAM" id="SSF48300">
    <property type="entry name" value="Ribosomal protein L7/12, oligomerisation (N-terminal) domain"/>
    <property type="match status" value="1"/>
</dbReference>
<feature type="chain" id="PRO_1000006992" description="Large ribosomal subunit protein bL12">
    <location>
        <begin position="1"/>
        <end position="121"/>
    </location>
</feature>
<sequence>MTREEMIQAIKEMSVLELNELVKACEEEFGVSAAAPVAVAGVAGAVGAAEEKSEFDVVLANAGSQKIKVIKAVRELTGLGLKEAKEIVDGAPKTLKEGVAKEAAEEMKAKLEEVGATIELK</sequence>
<name>RL7_CLONN</name>
<reference key="1">
    <citation type="journal article" date="2006" name="Nat. Biotechnol.">
        <title>The genome and transcriptomes of the anti-tumor agent Clostridium novyi-NT.</title>
        <authorList>
            <person name="Bettegowda C."/>
            <person name="Huang X."/>
            <person name="Lin J."/>
            <person name="Cheong I."/>
            <person name="Kohli M."/>
            <person name="Szabo S.A."/>
            <person name="Zhang X."/>
            <person name="Diaz L.A. Jr."/>
            <person name="Velculescu V.E."/>
            <person name="Parmigiani G."/>
            <person name="Kinzler K.W."/>
            <person name="Vogelstein B."/>
            <person name="Zhou S."/>
        </authorList>
    </citation>
    <scope>NUCLEOTIDE SEQUENCE [LARGE SCALE GENOMIC DNA]</scope>
    <source>
        <strain>NT</strain>
    </source>
</reference>
<gene>
    <name evidence="1" type="primary">rplL</name>
    <name type="ordered locus">NT01CX_1106</name>
</gene>
<keyword id="KW-1185">Reference proteome</keyword>
<keyword id="KW-0687">Ribonucleoprotein</keyword>
<keyword id="KW-0689">Ribosomal protein</keyword>
<organism>
    <name type="scientific">Clostridium novyi (strain NT)</name>
    <dbReference type="NCBI Taxonomy" id="386415"/>
    <lineage>
        <taxon>Bacteria</taxon>
        <taxon>Bacillati</taxon>
        <taxon>Bacillota</taxon>
        <taxon>Clostridia</taxon>
        <taxon>Eubacteriales</taxon>
        <taxon>Clostridiaceae</taxon>
        <taxon>Clostridium</taxon>
    </lineage>
</organism>
<proteinExistence type="inferred from homology"/>
<comment type="function">
    <text evidence="1">Forms part of the ribosomal stalk which helps the ribosome interact with GTP-bound translation factors. Is thus essential for accurate translation.</text>
</comment>
<comment type="subunit">
    <text evidence="1">Homodimer. Part of the ribosomal stalk of the 50S ribosomal subunit. Forms a multimeric L10(L12)X complex, where L10 forms an elongated spine to which 2 to 4 L12 dimers bind in a sequential fashion. Binds GTP-bound translation factors.</text>
</comment>
<comment type="similarity">
    <text evidence="1">Belongs to the bacterial ribosomal protein bL12 family.</text>
</comment>